<evidence type="ECO:0000255" key="1">
    <source>
        <dbReference type="HAMAP-Rule" id="MF_00807"/>
    </source>
</evidence>
<feature type="chain" id="PRO_1000213008" description="1-aminocyclopropane-1-carboxylate deaminase">
    <location>
        <begin position="1"/>
        <end position="338"/>
    </location>
</feature>
<feature type="active site" description="Nucleophile" evidence="1">
    <location>
        <position position="78"/>
    </location>
</feature>
<feature type="modified residue" description="N6-(pyridoxal phosphate)lysine" evidence="1">
    <location>
        <position position="51"/>
    </location>
</feature>
<organism>
    <name type="scientific">Variovorax paradoxus (strain S110)</name>
    <dbReference type="NCBI Taxonomy" id="543728"/>
    <lineage>
        <taxon>Bacteria</taxon>
        <taxon>Pseudomonadati</taxon>
        <taxon>Pseudomonadota</taxon>
        <taxon>Betaproteobacteria</taxon>
        <taxon>Burkholderiales</taxon>
        <taxon>Comamonadaceae</taxon>
        <taxon>Variovorax</taxon>
    </lineage>
</organism>
<sequence>MNLKKFPRHALTFGPTPIHPLKRLSAHLGGEVELYAKREDCNSGLAFGGNKTRKLEYLIPEALEGGYDTLVSIGGIQSNQTRQVAAVAAHLGLKCVLVQENWVNYSDAVYDRVGNIEMSRIMGADVRLDSAGFDIGIRKSWEEAMADVRKAGGKPFPIPAGCSEHPRGGLGFVGFAEEVRQQEAELGFKFDYIVTCSVTGSTQAGMVVGFAADGRADRVIGIDASAKPEQTFAQIVRIAKGTAELVELGRDITDKDVVLDRRFGGPEYGLPNEGTLESIRLCARLEGMLTDPVYEGKSMHGMIEKVRLGEFPAGSKVLYAHLGGVPALNAYSFLFRNG</sequence>
<keyword id="KW-0378">Hydrolase</keyword>
<keyword id="KW-0663">Pyridoxal phosphate</keyword>
<accession>C5CQC9</accession>
<comment type="function">
    <text evidence="1">Catalyzes a cyclopropane ring-opening reaction, the irreversible conversion of 1-aminocyclopropane-1-carboxylate (ACC) to ammonia and alpha-ketobutyrate. Allows growth on ACC as a nitrogen source.</text>
</comment>
<comment type="catalytic activity">
    <reaction evidence="1">
        <text>1-aminocyclopropane-1-carboxylate + H2O = 2-oxobutanoate + NH4(+)</text>
        <dbReference type="Rhea" id="RHEA:16933"/>
        <dbReference type="ChEBI" id="CHEBI:15377"/>
        <dbReference type="ChEBI" id="CHEBI:16763"/>
        <dbReference type="ChEBI" id="CHEBI:28938"/>
        <dbReference type="ChEBI" id="CHEBI:58360"/>
        <dbReference type="EC" id="3.5.99.7"/>
    </reaction>
</comment>
<comment type="cofactor">
    <cofactor evidence="1">
        <name>pyridoxal 5'-phosphate</name>
        <dbReference type="ChEBI" id="CHEBI:597326"/>
    </cofactor>
</comment>
<comment type="subunit">
    <text evidence="1">Homotrimer.</text>
</comment>
<comment type="similarity">
    <text evidence="1">Belongs to the ACC deaminase/D-cysteine desulfhydrase family.</text>
</comment>
<proteinExistence type="inferred from homology"/>
<dbReference type="EC" id="3.5.99.7" evidence="1"/>
<dbReference type="EMBL" id="CP001635">
    <property type="protein sequence ID" value="ACS21701.1"/>
    <property type="molecule type" value="Genomic_DNA"/>
</dbReference>
<dbReference type="SMR" id="C5CQC9"/>
<dbReference type="STRING" id="543728.Vapar_5099"/>
<dbReference type="KEGG" id="vap:Vapar_5099"/>
<dbReference type="eggNOG" id="COG2515">
    <property type="taxonomic scope" value="Bacteria"/>
</dbReference>
<dbReference type="HOGENOM" id="CLU_048897_2_1_4"/>
<dbReference type="OrthoDB" id="9801249at2"/>
<dbReference type="GO" id="GO:0008660">
    <property type="term" value="F:1-aminocyclopropane-1-carboxylate deaminase activity"/>
    <property type="evidence" value="ECO:0007669"/>
    <property type="project" value="UniProtKB-UniRule"/>
</dbReference>
<dbReference type="GO" id="GO:0019148">
    <property type="term" value="F:D-cysteine desulfhydrase activity"/>
    <property type="evidence" value="ECO:0007669"/>
    <property type="project" value="TreeGrafter"/>
</dbReference>
<dbReference type="GO" id="GO:0030170">
    <property type="term" value="F:pyridoxal phosphate binding"/>
    <property type="evidence" value="ECO:0007669"/>
    <property type="project" value="InterPro"/>
</dbReference>
<dbReference type="GO" id="GO:0018871">
    <property type="term" value="P:1-aminocyclopropane-1-carboxylate metabolic process"/>
    <property type="evidence" value="ECO:0007669"/>
    <property type="project" value="UniProtKB-UniRule"/>
</dbReference>
<dbReference type="GO" id="GO:0009310">
    <property type="term" value="P:amine catabolic process"/>
    <property type="evidence" value="ECO:0007669"/>
    <property type="project" value="InterPro"/>
</dbReference>
<dbReference type="CDD" id="cd06449">
    <property type="entry name" value="ACCD"/>
    <property type="match status" value="1"/>
</dbReference>
<dbReference type="FunFam" id="3.40.50.1100:FF:000048">
    <property type="entry name" value="1-aminocyclopropane-1-carboxylate deaminase"/>
    <property type="match status" value="1"/>
</dbReference>
<dbReference type="Gene3D" id="3.40.50.1100">
    <property type="match status" value="2"/>
</dbReference>
<dbReference type="HAMAP" id="MF_00807">
    <property type="entry name" value="ACC_deaminase"/>
    <property type="match status" value="1"/>
</dbReference>
<dbReference type="InterPro" id="IPR027278">
    <property type="entry name" value="ACCD_DCysDesulf"/>
</dbReference>
<dbReference type="InterPro" id="IPR005965">
    <property type="entry name" value="ACP_carboxylate_deaminase"/>
</dbReference>
<dbReference type="InterPro" id="IPR020601">
    <property type="entry name" value="ACP_carboxylate_deaminase_bac"/>
</dbReference>
<dbReference type="InterPro" id="IPR001926">
    <property type="entry name" value="TrpB-like_PALP"/>
</dbReference>
<dbReference type="InterPro" id="IPR036052">
    <property type="entry name" value="TrpB-like_PALP_sf"/>
</dbReference>
<dbReference type="NCBIfam" id="TIGR01274">
    <property type="entry name" value="ACC_deam"/>
    <property type="match status" value="1"/>
</dbReference>
<dbReference type="PANTHER" id="PTHR43780">
    <property type="entry name" value="1-AMINOCYCLOPROPANE-1-CARBOXYLATE DEAMINASE-RELATED"/>
    <property type="match status" value="1"/>
</dbReference>
<dbReference type="PANTHER" id="PTHR43780:SF2">
    <property type="entry name" value="1-AMINOCYCLOPROPANE-1-CARBOXYLATE DEAMINASE-RELATED"/>
    <property type="match status" value="1"/>
</dbReference>
<dbReference type="Pfam" id="PF00291">
    <property type="entry name" value="PALP"/>
    <property type="match status" value="1"/>
</dbReference>
<dbReference type="PIRSF" id="PIRSF006278">
    <property type="entry name" value="ACCD_DCysDesulf"/>
    <property type="match status" value="1"/>
</dbReference>
<dbReference type="SUPFAM" id="SSF53686">
    <property type="entry name" value="Tryptophan synthase beta subunit-like PLP-dependent enzymes"/>
    <property type="match status" value="1"/>
</dbReference>
<protein>
    <recommendedName>
        <fullName evidence="1">1-aminocyclopropane-1-carboxylate deaminase</fullName>
        <shortName evidence="1">ACC deaminase</shortName>
        <shortName evidence="1">ACCD</shortName>
        <ecNumber evidence="1">3.5.99.7</ecNumber>
    </recommendedName>
</protein>
<reference key="1">
    <citation type="journal article" date="2011" name="J. Bacteriol.">
        <title>Complete genome sequence of the metabolically versatile plant growth-promoting endophyte, Variovorax paradoxus S110.</title>
        <authorList>
            <person name="Han J.I."/>
            <person name="Choi H.K."/>
            <person name="Lee S.W."/>
            <person name="Orwin P.M."/>
            <person name="Kim J."/>
            <person name="Laroe S.L."/>
            <person name="Kim T.G."/>
            <person name="O'Neil J."/>
            <person name="Leadbetter J.R."/>
            <person name="Lee S.Y."/>
            <person name="Hur C.G."/>
            <person name="Spain J.C."/>
            <person name="Ovchinnikova G."/>
            <person name="Goodwin L."/>
            <person name="Han C."/>
        </authorList>
    </citation>
    <scope>NUCLEOTIDE SEQUENCE [LARGE SCALE GENOMIC DNA]</scope>
    <source>
        <strain>S110</strain>
    </source>
</reference>
<gene>
    <name evidence="1" type="primary">acdS</name>
    <name type="ordered locus">Vapar_5099</name>
</gene>
<name>1A1D_VARPS</name>